<gene>
    <name evidence="1" type="primary">dsdA</name>
    <name type="ordered locus">DSY1743</name>
</gene>
<evidence type="ECO:0000255" key="1">
    <source>
        <dbReference type="HAMAP-Rule" id="MF_01030"/>
    </source>
</evidence>
<comment type="catalytic activity">
    <reaction evidence="1">
        <text>D-serine = pyruvate + NH4(+)</text>
        <dbReference type="Rhea" id="RHEA:13977"/>
        <dbReference type="ChEBI" id="CHEBI:15361"/>
        <dbReference type="ChEBI" id="CHEBI:28938"/>
        <dbReference type="ChEBI" id="CHEBI:35247"/>
        <dbReference type="EC" id="4.3.1.18"/>
    </reaction>
</comment>
<comment type="cofactor">
    <cofactor evidence="1">
        <name>pyridoxal 5'-phosphate</name>
        <dbReference type="ChEBI" id="CHEBI:597326"/>
    </cofactor>
</comment>
<comment type="similarity">
    <text evidence="1">Belongs to the serine/threonine dehydratase family. DsdA subfamily.</text>
</comment>
<proteinExistence type="inferred from homology"/>
<feature type="chain" id="PRO_0000291725" description="Probable D-serine dehydratase">
    <location>
        <begin position="1"/>
        <end position="444"/>
    </location>
</feature>
<feature type="modified residue" description="N6-(pyridoxal phosphate)lysine" evidence="1">
    <location>
        <position position="118"/>
    </location>
</feature>
<sequence length="444" mass="48903">MTGKSPEVIPHTPVVQDLRAAREIFWINPHYRATKEFKEAQFGISLSDIHDAEERLRRFAPYLAKAFPETQPAQGLIESPIVPIKRMQSYLESRYGVQIPGDIWLKCDHQLPISGSIKARGGIYEVLKHAEETLIKQGLLTREDDYARLKDSSFRDVLSHYKIAVGSTGNLGLSIGVMGAELGFKVTVHMSADAKGWKKALLRSKGVEVIEYTSDYSKAVEEGRRQAEGDSRCHFIDDENSRDLFLGYAVAGLRLKEQLEKLNRKVDADHPLFVYLPCGVGGGPGGVTFGLKQVFQEHVHCFFAEPTHSPCMVLGLATGLHDGIAVQDIGLDNKTEADGLAVGRASRFVGKIMAGLLSGAFTVEDAELFRLLQALDHAEGIQCEPSALAGMAGPARLLLCKEGLQYIREHRLEEGLKRGTHLIWATGGSLVPVEVMKDYLSRGK</sequence>
<protein>
    <recommendedName>
        <fullName evidence="1">Probable D-serine dehydratase</fullName>
        <ecNumber evidence="1">4.3.1.18</ecNumber>
    </recommendedName>
    <alternativeName>
        <fullName evidence="1">D-serine deaminase</fullName>
        <shortName evidence="1">DSD</shortName>
    </alternativeName>
</protein>
<keyword id="KW-0456">Lyase</keyword>
<keyword id="KW-0663">Pyridoxal phosphate</keyword>
<keyword id="KW-1185">Reference proteome</keyword>
<reference key="1">
    <citation type="journal article" date="2006" name="J. Bacteriol.">
        <title>Complete genome sequence of the dehalorespiring bacterium Desulfitobacterium hafniense Y51 and comparison with Dehalococcoides ethenogenes 195.</title>
        <authorList>
            <person name="Nonaka H."/>
            <person name="Keresztes G."/>
            <person name="Shinoda Y."/>
            <person name="Ikenaga Y."/>
            <person name="Abe M."/>
            <person name="Naito K."/>
            <person name="Inatomi K."/>
            <person name="Furukawa K."/>
            <person name="Inui M."/>
            <person name="Yukawa H."/>
        </authorList>
    </citation>
    <scope>NUCLEOTIDE SEQUENCE [LARGE SCALE GENOMIC DNA]</scope>
    <source>
        <strain>Y51</strain>
    </source>
</reference>
<dbReference type="EC" id="4.3.1.18" evidence="1"/>
<dbReference type="EMBL" id="AP008230">
    <property type="protein sequence ID" value="BAE83532.1"/>
    <property type="molecule type" value="Genomic_DNA"/>
</dbReference>
<dbReference type="SMR" id="Q24WR0"/>
<dbReference type="STRING" id="138119.DSY1743"/>
<dbReference type="KEGG" id="dsy:DSY1743"/>
<dbReference type="eggNOG" id="COG3048">
    <property type="taxonomic scope" value="Bacteria"/>
</dbReference>
<dbReference type="HOGENOM" id="CLU_035707_0_0_9"/>
<dbReference type="Proteomes" id="UP000001946">
    <property type="component" value="Chromosome"/>
</dbReference>
<dbReference type="GO" id="GO:0008721">
    <property type="term" value="F:D-serine ammonia-lyase activity"/>
    <property type="evidence" value="ECO:0007669"/>
    <property type="project" value="UniProtKB-EC"/>
</dbReference>
<dbReference type="GO" id="GO:0016836">
    <property type="term" value="F:hydro-lyase activity"/>
    <property type="evidence" value="ECO:0007669"/>
    <property type="project" value="UniProtKB-UniRule"/>
</dbReference>
<dbReference type="GO" id="GO:0030170">
    <property type="term" value="F:pyridoxal phosphate binding"/>
    <property type="evidence" value="ECO:0007669"/>
    <property type="project" value="InterPro"/>
</dbReference>
<dbReference type="GO" id="GO:0036088">
    <property type="term" value="P:D-serine catabolic process"/>
    <property type="evidence" value="ECO:0007669"/>
    <property type="project" value="TreeGrafter"/>
</dbReference>
<dbReference type="GO" id="GO:0009097">
    <property type="term" value="P:isoleucine biosynthetic process"/>
    <property type="evidence" value="ECO:0007669"/>
    <property type="project" value="TreeGrafter"/>
</dbReference>
<dbReference type="Gene3D" id="3.40.50.1100">
    <property type="match status" value="2"/>
</dbReference>
<dbReference type="HAMAP" id="MF_01030">
    <property type="entry name" value="D_Ser_dehydrat"/>
    <property type="match status" value="1"/>
</dbReference>
<dbReference type="InterPro" id="IPR011780">
    <property type="entry name" value="D_Ser_am_lyase"/>
</dbReference>
<dbReference type="InterPro" id="IPR050147">
    <property type="entry name" value="Ser/Thr_Dehydratase"/>
</dbReference>
<dbReference type="InterPro" id="IPR000634">
    <property type="entry name" value="Ser/Thr_deHydtase_PyrdxlP-BS"/>
</dbReference>
<dbReference type="InterPro" id="IPR001926">
    <property type="entry name" value="TrpB-like_PALP"/>
</dbReference>
<dbReference type="InterPro" id="IPR036052">
    <property type="entry name" value="TrpB-like_PALP_sf"/>
</dbReference>
<dbReference type="NCBIfam" id="TIGR02035">
    <property type="entry name" value="D_Ser_am_lyase"/>
    <property type="match status" value="1"/>
</dbReference>
<dbReference type="NCBIfam" id="NF002823">
    <property type="entry name" value="PRK02991.1"/>
    <property type="match status" value="1"/>
</dbReference>
<dbReference type="PANTHER" id="PTHR48078:SF9">
    <property type="entry name" value="D-SERINE DEHYDRATASE"/>
    <property type="match status" value="1"/>
</dbReference>
<dbReference type="PANTHER" id="PTHR48078">
    <property type="entry name" value="THREONINE DEHYDRATASE, MITOCHONDRIAL-RELATED"/>
    <property type="match status" value="1"/>
</dbReference>
<dbReference type="Pfam" id="PF00291">
    <property type="entry name" value="PALP"/>
    <property type="match status" value="1"/>
</dbReference>
<dbReference type="SUPFAM" id="SSF53686">
    <property type="entry name" value="Tryptophan synthase beta subunit-like PLP-dependent enzymes"/>
    <property type="match status" value="1"/>
</dbReference>
<dbReference type="PROSITE" id="PS00165">
    <property type="entry name" value="DEHYDRATASE_SER_THR"/>
    <property type="match status" value="1"/>
</dbReference>
<name>SDHD_DESHY</name>
<organism>
    <name type="scientific">Desulfitobacterium hafniense (strain Y51)</name>
    <dbReference type="NCBI Taxonomy" id="138119"/>
    <lineage>
        <taxon>Bacteria</taxon>
        <taxon>Bacillati</taxon>
        <taxon>Bacillota</taxon>
        <taxon>Clostridia</taxon>
        <taxon>Eubacteriales</taxon>
        <taxon>Desulfitobacteriaceae</taxon>
        <taxon>Desulfitobacterium</taxon>
    </lineage>
</organism>
<accession>Q24WR0</accession>